<gene>
    <name evidence="1" type="primary">rplS</name>
    <name type="ordered locus">Achl_2219</name>
</gene>
<reference key="1">
    <citation type="submission" date="2009-01" db="EMBL/GenBank/DDBJ databases">
        <title>Complete sequence of chromosome of Arthrobacter chlorophenolicus A6.</title>
        <authorList>
            <consortium name="US DOE Joint Genome Institute"/>
            <person name="Lucas S."/>
            <person name="Copeland A."/>
            <person name="Lapidus A."/>
            <person name="Glavina del Rio T."/>
            <person name="Tice H."/>
            <person name="Bruce D."/>
            <person name="Goodwin L."/>
            <person name="Pitluck S."/>
            <person name="Goltsman E."/>
            <person name="Clum A."/>
            <person name="Larimer F."/>
            <person name="Land M."/>
            <person name="Hauser L."/>
            <person name="Kyrpides N."/>
            <person name="Mikhailova N."/>
            <person name="Jansson J."/>
            <person name="Richardson P."/>
        </authorList>
    </citation>
    <scope>NUCLEOTIDE SEQUENCE [LARGE SCALE GENOMIC DNA]</scope>
    <source>
        <strain>ATCC 700700 / DSM 12829 / CIP 107037 / JCM 12360 / KCTC 9906 / NCIMB 13794 / A6</strain>
    </source>
</reference>
<comment type="function">
    <text evidence="1">This protein is located at the 30S-50S ribosomal subunit interface and may play a role in the structure and function of the aminoacyl-tRNA binding site.</text>
</comment>
<comment type="similarity">
    <text evidence="1">Belongs to the bacterial ribosomal protein bL19 family.</text>
</comment>
<evidence type="ECO:0000255" key="1">
    <source>
        <dbReference type="HAMAP-Rule" id="MF_00402"/>
    </source>
</evidence>
<evidence type="ECO:0000305" key="2"/>
<feature type="chain" id="PRO_1000134552" description="Large ribosomal subunit protein bL19">
    <location>
        <begin position="1"/>
        <end position="119"/>
    </location>
</feature>
<sequence length="119" mass="13300">MHILDSVDAASLRTDVPAFRAGDTLKVHVNIIEGKNSRVQVFQGFVLGRQGDGVRETFTVRKVSFGVGVERTFPVHSPIIDKIEVVTKGDVRRAKLYYMRALRGKAAKIKEKRDFTSAK</sequence>
<proteinExistence type="inferred from homology"/>
<name>RL19_PSECP</name>
<protein>
    <recommendedName>
        <fullName evidence="1">Large ribosomal subunit protein bL19</fullName>
    </recommendedName>
    <alternativeName>
        <fullName evidence="2">50S ribosomal protein L19</fullName>
    </alternativeName>
</protein>
<organism>
    <name type="scientific">Pseudarthrobacter chlorophenolicus (strain ATCC 700700 / DSM 12829 / CIP 107037 / JCM 12360 / KCTC 9906 / NCIMB 13794 / A6)</name>
    <name type="common">Arthrobacter chlorophenolicus</name>
    <dbReference type="NCBI Taxonomy" id="452863"/>
    <lineage>
        <taxon>Bacteria</taxon>
        <taxon>Bacillati</taxon>
        <taxon>Actinomycetota</taxon>
        <taxon>Actinomycetes</taxon>
        <taxon>Micrococcales</taxon>
        <taxon>Micrococcaceae</taxon>
        <taxon>Pseudarthrobacter</taxon>
    </lineage>
</organism>
<keyword id="KW-0687">Ribonucleoprotein</keyword>
<keyword id="KW-0689">Ribosomal protein</keyword>
<dbReference type="EMBL" id="CP001341">
    <property type="protein sequence ID" value="ACL40185.1"/>
    <property type="molecule type" value="Genomic_DNA"/>
</dbReference>
<dbReference type="RefSeq" id="WP_015937401.1">
    <property type="nucleotide sequence ID" value="NC_011886.1"/>
</dbReference>
<dbReference type="SMR" id="B8HA93"/>
<dbReference type="STRING" id="452863.Achl_2219"/>
<dbReference type="KEGG" id="ach:Achl_2219"/>
<dbReference type="eggNOG" id="COG0335">
    <property type="taxonomic scope" value="Bacteria"/>
</dbReference>
<dbReference type="HOGENOM" id="CLU_103507_2_1_11"/>
<dbReference type="OrthoDB" id="9803541at2"/>
<dbReference type="Proteomes" id="UP000002505">
    <property type="component" value="Chromosome"/>
</dbReference>
<dbReference type="GO" id="GO:0022625">
    <property type="term" value="C:cytosolic large ribosomal subunit"/>
    <property type="evidence" value="ECO:0007669"/>
    <property type="project" value="TreeGrafter"/>
</dbReference>
<dbReference type="GO" id="GO:0003735">
    <property type="term" value="F:structural constituent of ribosome"/>
    <property type="evidence" value="ECO:0007669"/>
    <property type="project" value="InterPro"/>
</dbReference>
<dbReference type="GO" id="GO:0006412">
    <property type="term" value="P:translation"/>
    <property type="evidence" value="ECO:0007669"/>
    <property type="project" value="UniProtKB-UniRule"/>
</dbReference>
<dbReference type="FunFam" id="2.30.30.790:FF:000001">
    <property type="entry name" value="50S ribosomal protein L19"/>
    <property type="match status" value="1"/>
</dbReference>
<dbReference type="Gene3D" id="2.30.30.790">
    <property type="match status" value="1"/>
</dbReference>
<dbReference type="HAMAP" id="MF_00402">
    <property type="entry name" value="Ribosomal_bL19"/>
    <property type="match status" value="1"/>
</dbReference>
<dbReference type="InterPro" id="IPR001857">
    <property type="entry name" value="Ribosomal_bL19"/>
</dbReference>
<dbReference type="InterPro" id="IPR018257">
    <property type="entry name" value="Ribosomal_bL19_CS"/>
</dbReference>
<dbReference type="InterPro" id="IPR038657">
    <property type="entry name" value="Ribosomal_bL19_sf"/>
</dbReference>
<dbReference type="InterPro" id="IPR008991">
    <property type="entry name" value="Translation_prot_SH3-like_sf"/>
</dbReference>
<dbReference type="NCBIfam" id="TIGR01024">
    <property type="entry name" value="rplS_bact"/>
    <property type="match status" value="1"/>
</dbReference>
<dbReference type="PANTHER" id="PTHR15680:SF9">
    <property type="entry name" value="LARGE RIBOSOMAL SUBUNIT PROTEIN BL19M"/>
    <property type="match status" value="1"/>
</dbReference>
<dbReference type="PANTHER" id="PTHR15680">
    <property type="entry name" value="RIBOSOMAL PROTEIN L19"/>
    <property type="match status" value="1"/>
</dbReference>
<dbReference type="Pfam" id="PF01245">
    <property type="entry name" value="Ribosomal_L19"/>
    <property type="match status" value="1"/>
</dbReference>
<dbReference type="PIRSF" id="PIRSF002191">
    <property type="entry name" value="Ribosomal_L19"/>
    <property type="match status" value="1"/>
</dbReference>
<dbReference type="PRINTS" id="PR00061">
    <property type="entry name" value="RIBOSOMALL19"/>
</dbReference>
<dbReference type="SUPFAM" id="SSF50104">
    <property type="entry name" value="Translation proteins SH3-like domain"/>
    <property type="match status" value="1"/>
</dbReference>
<dbReference type="PROSITE" id="PS01015">
    <property type="entry name" value="RIBOSOMAL_L19"/>
    <property type="match status" value="1"/>
</dbReference>
<accession>B8HA93</accession>